<proteinExistence type="inferred from homology"/>
<reference key="1">
    <citation type="journal article" date="2008" name="J. Bacteriol.">
        <title>Insights into the environmental resistance gene pool from the genome sequence of the multidrug-resistant environmental isolate Escherichia coli SMS-3-5.</title>
        <authorList>
            <person name="Fricke W.F."/>
            <person name="Wright M.S."/>
            <person name="Lindell A.H."/>
            <person name="Harkins D.M."/>
            <person name="Baker-Austin C."/>
            <person name="Ravel J."/>
            <person name="Stepanauskas R."/>
        </authorList>
    </citation>
    <scope>NUCLEOTIDE SEQUENCE [LARGE SCALE GENOMIC DNA]</scope>
    <source>
        <strain>SMS-3-5 / SECEC</strain>
    </source>
</reference>
<protein>
    <recommendedName>
        <fullName evidence="1">UPF0412 protein YaaI</fullName>
    </recommendedName>
</protein>
<sequence length="134" mass="14506">MKSVFTLSASLAISLLLCCTAQANDHKILGVIAMPRNETNDLALKLPVCRIVKRIQLTADHGDLQLSGASVYFKAARSASQSLNIPSEIKEGQTTDWININSDNDNKRCVSKITFSGHTVNSSDMATLKIIGDD</sequence>
<evidence type="ECO:0000255" key="1">
    <source>
        <dbReference type="HAMAP-Rule" id="MF_01372"/>
    </source>
</evidence>
<name>YAAI_ECOSM</name>
<accession>B1LFU3</accession>
<comment type="similarity">
    <text evidence="1">Belongs to the UPF0412 family.</text>
</comment>
<organism>
    <name type="scientific">Escherichia coli (strain SMS-3-5 / SECEC)</name>
    <dbReference type="NCBI Taxonomy" id="439855"/>
    <lineage>
        <taxon>Bacteria</taxon>
        <taxon>Pseudomonadati</taxon>
        <taxon>Pseudomonadota</taxon>
        <taxon>Gammaproteobacteria</taxon>
        <taxon>Enterobacterales</taxon>
        <taxon>Enterobacteriaceae</taxon>
        <taxon>Escherichia</taxon>
    </lineage>
</organism>
<keyword id="KW-0732">Signal</keyword>
<gene>
    <name evidence="1" type="primary">yaaI</name>
    <name type="ordered locus">EcSMS35_0011</name>
</gene>
<feature type="signal peptide" evidence="1">
    <location>
        <begin position="1"/>
        <end position="23"/>
    </location>
</feature>
<feature type="chain" id="PRO_1000144741" description="UPF0412 protein YaaI">
    <location>
        <begin position="24"/>
        <end position="134"/>
    </location>
</feature>
<dbReference type="EMBL" id="CP000970">
    <property type="protein sequence ID" value="ACB16371.1"/>
    <property type="molecule type" value="Genomic_DNA"/>
</dbReference>
<dbReference type="RefSeq" id="WP_000843576.1">
    <property type="nucleotide sequence ID" value="NC_010498.1"/>
</dbReference>
<dbReference type="KEGG" id="ecm:EcSMS35_0011"/>
<dbReference type="HOGENOM" id="CLU_158661_0_0_6"/>
<dbReference type="Proteomes" id="UP000007011">
    <property type="component" value="Chromosome"/>
</dbReference>
<dbReference type="HAMAP" id="MF_01372">
    <property type="entry name" value="UPF0412"/>
    <property type="match status" value="1"/>
</dbReference>
<dbReference type="InterPro" id="IPR020240">
    <property type="entry name" value="UPF0412_YaaI"/>
</dbReference>
<dbReference type="NCBIfam" id="NF007541">
    <property type="entry name" value="PRK10154.1"/>
    <property type="match status" value="1"/>
</dbReference>
<dbReference type="Pfam" id="PF10807">
    <property type="entry name" value="DUF2541"/>
    <property type="match status" value="1"/>
</dbReference>